<dbReference type="EC" id="7.1.1.9"/>
<dbReference type="EMBL" id="L09121">
    <property type="protein sequence ID" value="AAB00370.1"/>
    <property type="molecule type" value="Genomic_DNA"/>
</dbReference>
<dbReference type="EMBL" id="AP008226">
    <property type="protein sequence ID" value="BAD70958.1"/>
    <property type="molecule type" value="Genomic_DNA"/>
</dbReference>
<dbReference type="RefSeq" id="WP_011173204.1">
    <property type="nucleotide sequence ID" value="NC_006461.1"/>
</dbReference>
<dbReference type="RefSeq" id="YP_144401.1">
    <property type="nucleotide sequence ID" value="NC_006461.1"/>
</dbReference>
<dbReference type="PDB" id="1EHK">
    <property type="method" value="X-ray"/>
    <property type="resolution" value="2.40 A"/>
    <property type="chains" value="A=1-562"/>
</dbReference>
<dbReference type="PDB" id="2QPD">
    <property type="method" value="X-ray"/>
    <property type="resolution" value="3.25 A"/>
    <property type="chains" value="A=2-562"/>
</dbReference>
<dbReference type="PDB" id="2QPE">
    <property type="method" value="X-ray"/>
    <property type="resolution" value="2.90 A"/>
    <property type="chains" value="A=2-562"/>
</dbReference>
<dbReference type="PDB" id="3BVD">
    <property type="method" value="X-ray"/>
    <property type="resolution" value="3.37 A"/>
    <property type="chains" value="A=2-562"/>
</dbReference>
<dbReference type="PDB" id="3EH3">
    <property type="method" value="X-ray"/>
    <property type="resolution" value="3.10 A"/>
    <property type="chains" value="A=2-562"/>
</dbReference>
<dbReference type="PDB" id="3EH4">
    <property type="method" value="X-ray"/>
    <property type="resolution" value="2.90 A"/>
    <property type="chains" value="A=2-562"/>
</dbReference>
<dbReference type="PDB" id="3EH5">
    <property type="method" value="X-ray"/>
    <property type="resolution" value="2.80 A"/>
    <property type="chains" value="A=2-562"/>
</dbReference>
<dbReference type="PDB" id="3QJQ">
    <property type="method" value="X-ray"/>
    <property type="resolution" value="2.90 A"/>
    <property type="chains" value="A=2-562"/>
</dbReference>
<dbReference type="PDB" id="3QJR">
    <property type="method" value="X-ray"/>
    <property type="resolution" value="3.20 A"/>
    <property type="chains" value="A=2-562"/>
</dbReference>
<dbReference type="PDB" id="3QJS">
    <property type="method" value="X-ray"/>
    <property type="resolution" value="2.80 A"/>
    <property type="chains" value="A=2-562"/>
</dbReference>
<dbReference type="PDB" id="3QJT">
    <property type="method" value="X-ray"/>
    <property type="resolution" value="2.95 A"/>
    <property type="chains" value="A=2-562"/>
</dbReference>
<dbReference type="PDB" id="3QJU">
    <property type="method" value="X-ray"/>
    <property type="resolution" value="2.90 A"/>
    <property type="chains" value="A=2-562"/>
</dbReference>
<dbReference type="PDB" id="3QJV">
    <property type="method" value="X-ray"/>
    <property type="resolution" value="2.80 A"/>
    <property type="chains" value="A=2-562"/>
</dbReference>
<dbReference type="PDB" id="3S33">
    <property type="method" value="X-ray"/>
    <property type="resolution" value="4.45 A"/>
    <property type="chains" value="A=2-562"/>
</dbReference>
<dbReference type="PDB" id="3S38">
    <property type="method" value="X-ray"/>
    <property type="resolution" value="4.20 A"/>
    <property type="chains" value="A=2-562"/>
</dbReference>
<dbReference type="PDB" id="3S39">
    <property type="method" value="X-ray"/>
    <property type="resolution" value="4.80 A"/>
    <property type="chains" value="A=2-562"/>
</dbReference>
<dbReference type="PDB" id="3S3A">
    <property type="method" value="X-ray"/>
    <property type="resolution" value="4.25 A"/>
    <property type="chains" value="A=2-562"/>
</dbReference>
<dbReference type="PDB" id="3S3B">
    <property type="method" value="X-ray"/>
    <property type="resolution" value="3.30 A"/>
    <property type="chains" value="A=2-562"/>
</dbReference>
<dbReference type="PDB" id="3S3C">
    <property type="method" value="X-ray"/>
    <property type="resolution" value="4.00 A"/>
    <property type="chains" value="A=2-562"/>
</dbReference>
<dbReference type="PDB" id="3S3D">
    <property type="method" value="X-ray"/>
    <property type="resolution" value="3.75 A"/>
    <property type="chains" value="A=2-562"/>
</dbReference>
<dbReference type="PDB" id="3S8F">
    <property type="method" value="X-ray"/>
    <property type="resolution" value="1.80 A"/>
    <property type="chains" value="A=2-562"/>
</dbReference>
<dbReference type="PDB" id="3S8G">
    <property type="method" value="X-ray"/>
    <property type="resolution" value="1.80 A"/>
    <property type="chains" value="A=2-562"/>
</dbReference>
<dbReference type="PDB" id="4FA7">
    <property type="method" value="X-ray"/>
    <property type="resolution" value="2.50 A"/>
    <property type="chains" value="A=2-562"/>
</dbReference>
<dbReference type="PDB" id="4FAA">
    <property type="method" value="X-ray"/>
    <property type="resolution" value="2.80 A"/>
    <property type="chains" value="A=2-562"/>
</dbReference>
<dbReference type="PDB" id="4G70">
    <property type="method" value="X-ray"/>
    <property type="resolution" value="2.60 A"/>
    <property type="chains" value="A=2-562"/>
</dbReference>
<dbReference type="PDB" id="4G71">
    <property type="method" value="X-ray"/>
    <property type="resolution" value="2.90 A"/>
    <property type="chains" value="A=2-562"/>
</dbReference>
<dbReference type="PDB" id="4G72">
    <property type="method" value="X-ray"/>
    <property type="resolution" value="3.19 A"/>
    <property type="chains" value="A=2-562"/>
</dbReference>
<dbReference type="PDB" id="4G7Q">
    <property type="method" value="X-ray"/>
    <property type="resolution" value="2.60 A"/>
    <property type="chains" value="A=2-562"/>
</dbReference>
<dbReference type="PDB" id="4G7R">
    <property type="method" value="X-ray"/>
    <property type="resolution" value="3.05 A"/>
    <property type="chains" value="A=2-562"/>
</dbReference>
<dbReference type="PDB" id="4G7S">
    <property type="method" value="X-ray"/>
    <property type="resolution" value="2.00 A"/>
    <property type="chains" value="A=2-562"/>
</dbReference>
<dbReference type="PDB" id="4GP4">
    <property type="method" value="X-ray"/>
    <property type="resolution" value="2.80 A"/>
    <property type="chains" value="A=2-562"/>
</dbReference>
<dbReference type="PDB" id="4GP5">
    <property type="method" value="X-ray"/>
    <property type="resolution" value="2.70 A"/>
    <property type="chains" value="A=2-562"/>
</dbReference>
<dbReference type="PDB" id="4GP8">
    <property type="method" value="X-ray"/>
    <property type="resolution" value="2.80 A"/>
    <property type="chains" value="A=2-562"/>
</dbReference>
<dbReference type="PDB" id="4N4Y">
    <property type="method" value="X-ray"/>
    <property type="resolution" value="2.90 A"/>
    <property type="chains" value="A=2-562"/>
</dbReference>
<dbReference type="PDB" id="5NDC">
    <property type="method" value="X-ray"/>
    <property type="resolution" value="2.30 A"/>
    <property type="chains" value="A=2-562"/>
</dbReference>
<dbReference type="PDB" id="8AJZ">
    <property type="method" value="X-ray"/>
    <property type="resolution" value="2.00 A"/>
    <property type="chains" value="A=2-562"/>
</dbReference>
<dbReference type="PDB" id="8HUA">
    <property type="method" value="X-ray"/>
    <property type="resolution" value="2.12 A"/>
    <property type="chains" value="A=2-562"/>
</dbReference>
<dbReference type="PDB" id="8K65">
    <property type="method" value="X-ray"/>
    <property type="resolution" value="2.00 A"/>
    <property type="chains" value="A=2-562"/>
</dbReference>
<dbReference type="PDB" id="8K6Y">
    <property type="method" value="X-ray"/>
    <property type="resolution" value="2.00 A"/>
    <property type="chains" value="A=2-562"/>
</dbReference>
<dbReference type="PDBsum" id="1EHK"/>
<dbReference type="PDBsum" id="2QPD"/>
<dbReference type="PDBsum" id="2QPE"/>
<dbReference type="PDBsum" id="3BVD"/>
<dbReference type="PDBsum" id="3EH3"/>
<dbReference type="PDBsum" id="3EH4"/>
<dbReference type="PDBsum" id="3EH5"/>
<dbReference type="PDBsum" id="3QJQ"/>
<dbReference type="PDBsum" id="3QJR"/>
<dbReference type="PDBsum" id="3QJS"/>
<dbReference type="PDBsum" id="3QJT"/>
<dbReference type="PDBsum" id="3QJU"/>
<dbReference type="PDBsum" id="3QJV"/>
<dbReference type="PDBsum" id="3S33"/>
<dbReference type="PDBsum" id="3S38"/>
<dbReference type="PDBsum" id="3S39"/>
<dbReference type="PDBsum" id="3S3A"/>
<dbReference type="PDBsum" id="3S3B"/>
<dbReference type="PDBsum" id="3S3C"/>
<dbReference type="PDBsum" id="3S3D"/>
<dbReference type="PDBsum" id="3S8F"/>
<dbReference type="PDBsum" id="3S8G"/>
<dbReference type="PDBsum" id="4FA7"/>
<dbReference type="PDBsum" id="4FAA"/>
<dbReference type="PDBsum" id="4G70"/>
<dbReference type="PDBsum" id="4G71"/>
<dbReference type="PDBsum" id="4G72"/>
<dbReference type="PDBsum" id="4G7Q"/>
<dbReference type="PDBsum" id="4G7R"/>
<dbReference type="PDBsum" id="4G7S"/>
<dbReference type="PDBsum" id="4GP4"/>
<dbReference type="PDBsum" id="4GP5"/>
<dbReference type="PDBsum" id="4GP8"/>
<dbReference type="PDBsum" id="4N4Y"/>
<dbReference type="PDBsum" id="5NDC"/>
<dbReference type="PDBsum" id="8AJZ"/>
<dbReference type="PDBsum" id="8HUA"/>
<dbReference type="PDBsum" id="8K65"/>
<dbReference type="PDBsum" id="8K6Y"/>
<dbReference type="SMR" id="Q5SJ79"/>
<dbReference type="DrugBank" id="DB02451">
    <property type="generic name" value="B-nonylglucoside"/>
</dbReference>
<dbReference type="TCDB" id="3.D.4.2.1">
    <property type="family name" value="the proton-translocating cytochrome oxidase (cox) superfamily"/>
</dbReference>
<dbReference type="EnsemblBacteria" id="BAD70958">
    <property type="protein sequence ID" value="BAD70958"/>
    <property type="gene ID" value="BAD70958"/>
</dbReference>
<dbReference type="GeneID" id="3168993"/>
<dbReference type="KEGG" id="ttj:TTHA1135"/>
<dbReference type="PATRIC" id="fig|300852.9.peg.1114"/>
<dbReference type="eggNOG" id="COG0843">
    <property type="taxonomic scope" value="Bacteria"/>
</dbReference>
<dbReference type="HOGENOM" id="CLU_033807_1_0_0"/>
<dbReference type="PhylomeDB" id="Q5SJ79"/>
<dbReference type="BioCyc" id="MetaCyc:MONOMER-21000"/>
<dbReference type="BRENDA" id="7.1.1.9">
    <property type="organism ID" value="2305"/>
</dbReference>
<dbReference type="UniPathway" id="UPA00705"/>
<dbReference type="EvolutionaryTrace" id="Q5SJ79"/>
<dbReference type="Proteomes" id="UP000000532">
    <property type="component" value="Chromosome"/>
</dbReference>
<dbReference type="GO" id="GO:0005886">
    <property type="term" value="C:plasma membrane"/>
    <property type="evidence" value="ECO:0007669"/>
    <property type="project" value="UniProtKB-SubCell"/>
</dbReference>
<dbReference type="GO" id="GO:0004129">
    <property type="term" value="F:cytochrome-c oxidase activity"/>
    <property type="evidence" value="ECO:0007669"/>
    <property type="project" value="UniProtKB-EC"/>
</dbReference>
<dbReference type="GO" id="GO:0020037">
    <property type="term" value="F:heme binding"/>
    <property type="evidence" value="ECO:0007669"/>
    <property type="project" value="InterPro"/>
</dbReference>
<dbReference type="GO" id="GO:0046872">
    <property type="term" value="F:metal ion binding"/>
    <property type="evidence" value="ECO:0007669"/>
    <property type="project" value="UniProtKB-KW"/>
</dbReference>
<dbReference type="GO" id="GO:0006119">
    <property type="term" value="P:oxidative phosphorylation"/>
    <property type="evidence" value="ECO:0007669"/>
    <property type="project" value="UniProtKB-UniPathway"/>
</dbReference>
<dbReference type="CDD" id="cd01660">
    <property type="entry name" value="ba3-like_Oxidase_I"/>
    <property type="match status" value="1"/>
</dbReference>
<dbReference type="Gene3D" id="1.20.210.10">
    <property type="entry name" value="Cytochrome c oxidase-like, subunit I domain"/>
    <property type="match status" value="1"/>
</dbReference>
<dbReference type="InterPro" id="IPR033943">
    <property type="entry name" value="Ba3-like_Oxidase_I"/>
</dbReference>
<dbReference type="InterPro" id="IPR023616">
    <property type="entry name" value="Cyt_c_oxase-like_su1_dom"/>
</dbReference>
<dbReference type="InterPro" id="IPR036927">
    <property type="entry name" value="Cyt_c_oxase-like_su1_sf"/>
</dbReference>
<dbReference type="InterPro" id="IPR000883">
    <property type="entry name" value="Cyt_C_Oxase_1"/>
</dbReference>
<dbReference type="InterPro" id="IPR023615">
    <property type="entry name" value="Cyt_c_Oxase_su1_BS"/>
</dbReference>
<dbReference type="PANTHER" id="PTHR10422">
    <property type="entry name" value="CYTOCHROME C OXIDASE SUBUNIT 1"/>
    <property type="match status" value="1"/>
</dbReference>
<dbReference type="PANTHER" id="PTHR10422:SF40">
    <property type="entry name" value="CYTOCHROME C OXIDASE SUBUNIT I"/>
    <property type="match status" value="1"/>
</dbReference>
<dbReference type="Pfam" id="PF00115">
    <property type="entry name" value="COX1"/>
    <property type="match status" value="1"/>
</dbReference>
<dbReference type="PRINTS" id="PR01165">
    <property type="entry name" value="CYCOXIDASEI"/>
</dbReference>
<dbReference type="SUPFAM" id="SSF81442">
    <property type="entry name" value="Cytochrome c oxidase subunit I-like"/>
    <property type="match status" value="1"/>
</dbReference>
<dbReference type="PROSITE" id="PS50855">
    <property type="entry name" value="COX1"/>
    <property type="match status" value="1"/>
</dbReference>
<dbReference type="PROSITE" id="PS00077">
    <property type="entry name" value="COX1_CUB"/>
    <property type="match status" value="1"/>
</dbReference>
<evidence type="ECO:0000250" key="1"/>
<evidence type="ECO:0000255" key="2"/>
<evidence type="ECO:0000305" key="3"/>
<evidence type="ECO:0007829" key="4">
    <source>
        <dbReference type="PDB" id="3EH3"/>
    </source>
</evidence>
<evidence type="ECO:0007829" key="5">
    <source>
        <dbReference type="PDB" id="3EH5"/>
    </source>
</evidence>
<evidence type="ECO:0007829" key="6">
    <source>
        <dbReference type="PDB" id="3QJU"/>
    </source>
</evidence>
<evidence type="ECO:0007829" key="7">
    <source>
        <dbReference type="PDB" id="3S8F"/>
    </source>
</evidence>
<evidence type="ECO:0007829" key="8">
    <source>
        <dbReference type="PDB" id="4G70"/>
    </source>
</evidence>
<evidence type="ECO:0007829" key="9">
    <source>
        <dbReference type="PDB" id="5NDC"/>
    </source>
</evidence>
<feature type="chain" id="PRO_0000183462" description="Cytochrome c oxidase subunit 1">
    <location>
        <begin position="1"/>
        <end position="562"/>
    </location>
</feature>
<feature type="transmembrane region" description="Helical" evidence="2">
    <location>
        <begin position="21"/>
        <end position="41"/>
    </location>
</feature>
<feature type="transmembrane region" description="Helical" evidence="2">
    <location>
        <begin position="74"/>
        <end position="94"/>
    </location>
</feature>
<feature type="transmembrane region" description="Helical" evidence="2">
    <location>
        <begin position="105"/>
        <end position="125"/>
    </location>
</feature>
<feature type="transmembrane region" description="Helical" evidence="2">
    <location>
        <begin position="144"/>
        <end position="164"/>
    </location>
</feature>
<feature type="transmembrane region" description="Helical" evidence="2">
    <location>
        <begin position="187"/>
        <end position="207"/>
    </location>
</feature>
<feature type="transmembrane region" description="Helical" evidence="2">
    <location>
        <begin position="227"/>
        <end position="247"/>
    </location>
</feature>
<feature type="transmembrane region" description="Helical" evidence="2">
    <location>
        <begin position="267"/>
        <end position="287"/>
    </location>
</feature>
<feature type="transmembrane region" description="Helical" evidence="2">
    <location>
        <begin position="300"/>
        <end position="320"/>
    </location>
</feature>
<feature type="transmembrane region" description="Helical" evidence="2">
    <location>
        <begin position="345"/>
        <end position="365"/>
    </location>
</feature>
<feature type="transmembrane region" description="Helical" evidence="2">
    <location>
        <begin position="385"/>
        <end position="405"/>
    </location>
</feature>
<feature type="transmembrane region" description="Helical" evidence="2">
    <location>
        <begin position="420"/>
        <end position="440"/>
    </location>
</feature>
<feature type="transmembrane region" description="Helical" evidence="2">
    <location>
        <begin position="471"/>
        <end position="491"/>
    </location>
</feature>
<feature type="transmembrane region" description="Helical" evidence="2">
    <location>
        <begin position="527"/>
        <end position="547"/>
    </location>
</feature>
<feature type="binding site" description="axial binding residue" evidence="3">
    <location>
        <position position="72"/>
    </location>
    <ligand>
        <name>Fe(II)-heme a</name>
        <dbReference type="ChEBI" id="CHEBI:61715"/>
    </ligand>
    <ligandPart>
        <name>Fe</name>
        <dbReference type="ChEBI" id="CHEBI:18248"/>
    </ligandPart>
</feature>
<feature type="binding site">
    <location>
        <position position="233"/>
    </location>
    <ligand>
        <name>Cu cation</name>
        <dbReference type="ChEBI" id="CHEBI:23378"/>
        <label>B</label>
    </ligand>
</feature>
<feature type="binding site">
    <location>
        <position position="237"/>
    </location>
    <ligand>
        <name>Cu cation</name>
        <dbReference type="ChEBI" id="CHEBI:23378"/>
        <label>B</label>
    </ligand>
</feature>
<feature type="binding site" evidence="3">
    <location>
        <position position="282"/>
    </location>
    <ligand>
        <name>Cu cation</name>
        <dbReference type="ChEBI" id="CHEBI:23378"/>
        <label>B</label>
    </ligand>
</feature>
<feature type="binding site" evidence="3">
    <location>
        <position position="283"/>
    </location>
    <ligand>
        <name>Cu cation</name>
        <dbReference type="ChEBI" id="CHEBI:23378"/>
        <label>B</label>
    </ligand>
</feature>
<feature type="binding site" description="axial binding residue" evidence="3">
    <location>
        <position position="384"/>
    </location>
    <ligand>
        <name>heme a3</name>
        <dbReference type="ChEBI" id="CHEBI:83282"/>
    </ligand>
    <ligandPart>
        <name>Fe</name>
        <dbReference type="ChEBI" id="CHEBI:18248"/>
    </ligandPart>
</feature>
<feature type="binding site" description="axial binding residue" evidence="3">
    <location>
        <position position="386"/>
    </location>
    <ligand>
        <name>Fe(II)-heme a</name>
        <dbReference type="ChEBI" id="CHEBI:61715"/>
    </ligand>
    <ligandPart>
        <name>Fe</name>
        <dbReference type="ChEBI" id="CHEBI:18248"/>
    </ligandPart>
</feature>
<feature type="cross-link" description="1'-histidyl-3'-tyrosine (His-Tyr)">
    <location>
        <begin position="233"/>
        <end position="237"/>
    </location>
</feature>
<feature type="helix" evidence="7">
    <location>
        <begin position="10"/>
        <end position="14"/>
    </location>
</feature>
<feature type="helix" evidence="7">
    <location>
        <begin position="16"/>
        <end position="36"/>
    </location>
</feature>
<feature type="helix" evidence="7">
    <location>
        <begin position="38"/>
        <end position="45"/>
    </location>
</feature>
<feature type="turn" evidence="7">
    <location>
        <begin position="46"/>
        <end position="48"/>
    </location>
</feature>
<feature type="helix" evidence="7">
    <location>
        <begin position="52"/>
        <end position="58"/>
    </location>
</feature>
<feature type="helix" evidence="7">
    <location>
        <begin position="65"/>
        <end position="77"/>
    </location>
</feature>
<feature type="helix" evidence="7">
    <location>
        <begin position="79"/>
        <end position="97"/>
    </location>
</feature>
<feature type="helix" evidence="7">
    <location>
        <begin position="103"/>
        <end position="125"/>
    </location>
</feature>
<feature type="turn" evidence="7">
    <location>
        <begin position="132"/>
        <end position="135"/>
    </location>
</feature>
<feature type="strand" evidence="4">
    <location>
        <begin position="137"/>
        <end position="139"/>
    </location>
</feature>
<feature type="helix" evidence="7">
    <location>
        <begin position="143"/>
        <end position="173"/>
    </location>
</feature>
<feature type="helix" evidence="7">
    <location>
        <begin position="181"/>
        <end position="206"/>
    </location>
</feature>
<feature type="helix" evidence="7">
    <location>
        <begin position="208"/>
        <end position="213"/>
    </location>
</feature>
<feature type="strand" evidence="7">
    <location>
        <begin position="215"/>
        <end position="219"/>
    </location>
</feature>
<feature type="helix" evidence="7">
    <location>
        <begin position="221"/>
        <end position="232"/>
    </location>
</feature>
<feature type="helix" evidence="7">
    <location>
        <begin position="234"/>
        <end position="249"/>
    </location>
</feature>
<feature type="helix" evidence="7">
    <location>
        <begin position="251"/>
        <end position="254"/>
    </location>
</feature>
<feature type="helix" evidence="7">
    <location>
        <begin position="262"/>
        <end position="275"/>
    </location>
</feature>
<feature type="helix" evidence="7">
    <location>
        <begin position="280"/>
        <end position="283"/>
    </location>
</feature>
<feature type="turn" evidence="8">
    <location>
        <begin position="284"/>
        <end position="286"/>
    </location>
</feature>
<feature type="strand" evidence="9">
    <location>
        <begin position="288"/>
        <end position="290"/>
    </location>
</feature>
<feature type="helix" evidence="7">
    <location>
        <begin position="292"/>
        <end position="326"/>
    </location>
</feature>
<feature type="strand" evidence="7">
    <location>
        <begin position="331"/>
        <end position="333"/>
    </location>
</feature>
<feature type="helix" evidence="7">
    <location>
        <begin position="334"/>
        <end position="337"/>
    </location>
</feature>
<feature type="helix" evidence="7">
    <location>
        <begin position="344"/>
        <end position="366"/>
    </location>
</feature>
<feature type="helix" evidence="7">
    <location>
        <begin position="369"/>
        <end position="371"/>
    </location>
</feature>
<feature type="helix" evidence="7">
    <location>
        <begin position="372"/>
        <end position="375"/>
    </location>
</feature>
<feature type="strand" evidence="4">
    <location>
        <begin position="376"/>
        <end position="378"/>
    </location>
</feature>
<feature type="helix" evidence="7">
    <location>
        <begin position="380"/>
        <end position="388"/>
    </location>
</feature>
<feature type="turn" evidence="7">
    <location>
        <begin position="389"/>
        <end position="391"/>
    </location>
</feature>
<feature type="helix" evidence="7">
    <location>
        <begin position="392"/>
        <end position="399"/>
    </location>
</feature>
<feature type="turn" evidence="7">
    <location>
        <begin position="400"/>
        <end position="403"/>
    </location>
</feature>
<feature type="helix" evidence="7">
    <location>
        <begin position="404"/>
        <end position="409"/>
    </location>
</feature>
<feature type="helix" evidence="7">
    <location>
        <begin position="415"/>
        <end position="444"/>
    </location>
</feature>
<feature type="strand" evidence="7">
    <location>
        <begin position="448"/>
        <end position="450"/>
    </location>
</feature>
<feature type="helix" evidence="7">
    <location>
        <begin position="453"/>
        <end position="455"/>
    </location>
</feature>
<feature type="helix" evidence="6">
    <location>
        <begin position="457"/>
        <end position="459"/>
    </location>
</feature>
<feature type="helix" evidence="7">
    <location>
        <begin position="461"/>
        <end position="463"/>
    </location>
</feature>
<feature type="helix" evidence="7">
    <location>
        <begin position="464"/>
        <end position="492"/>
    </location>
</feature>
<feature type="strand" evidence="5">
    <location>
        <begin position="493"/>
        <end position="495"/>
    </location>
</feature>
<feature type="helix" evidence="7">
    <location>
        <begin position="499"/>
        <end position="503"/>
    </location>
</feature>
<feature type="helix" evidence="7">
    <location>
        <begin position="520"/>
        <end position="524"/>
    </location>
</feature>
<feature type="helix" evidence="7">
    <location>
        <begin position="527"/>
        <end position="550"/>
    </location>
</feature>
<keyword id="KW-0002">3D-structure</keyword>
<keyword id="KW-1003">Cell membrane</keyword>
<keyword id="KW-0186">Copper</keyword>
<keyword id="KW-0249">Electron transport</keyword>
<keyword id="KW-0349">Heme</keyword>
<keyword id="KW-0375">Hydrogen ion transport</keyword>
<keyword id="KW-0406">Ion transport</keyword>
<keyword id="KW-0408">Iron</keyword>
<keyword id="KW-0472">Membrane</keyword>
<keyword id="KW-0479">Metal-binding</keyword>
<keyword id="KW-1185">Reference proteome</keyword>
<keyword id="KW-0679">Respiratory chain</keyword>
<keyword id="KW-1278">Translocase</keyword>
<keyword id="KW-0812">Transmembrane</keyword>
<keyword id="KW-1133">Transmembrane helix</keyword>
<keyword id="KW-0813">Transport</keyword>
<gene>
    <name type="primary">cbaA</name>
    <name type="ordered locus">TTHA1135</name>
</gene>
<proteinExistence type="evidence at protein level"/>
<name>COX1_THET8</name>
<accession>Q5SJ79</accession>
<protein>
    <recommendedName>
        <fullName>Cytochrome c oxidase subunit 1</fullName>
        <ecNumber>7.1.1.9</ecNumber>
    </recommendedName>
    <alternativeName>
        <fullName>Cytochrome c ba(3) subunit I</fullName>
    </alternativeName>
    <alternativeName>
        <fullName>Cytochrome c oxidase polypeptide I</fullName>
    </alternativeName>
    <alternativeName>
        <fullName>Cytochrome cba3 subunit 1</fullName>
    </alternativeName>
</protein>
<sequence>MAVRASEISRVYEAYPEKKATLYFLVLGFLALIVGSLFGPFQALNYGNVDAYPLLKRLLPFVQSYYQGLTLHGVLNAIVFTQLFAQAIMVYLPARELNMRPNMGLMWLSWWMAFIGLVVAALPLLANEATVLYTFYPPLKGHWAFYLGASVFVLSTWVSIYIVLDLWRRWKAANPGKVTPLVTYMAVVFWLMWFLASLGLVLEAVLFLLPWSFGLVEGVDPLVARTLFWWTGHPIVYFWLLPAYAIIYTILPKQAGGKLVSDPMARLAFLLFLLLSTPVGFHHQFADPGIDPTWKMIHSVLTLFVAVPSLMTAFTVAASLEFAGRLRGGRGLFGWIRALPWDNPAFVAPVLGLLGFIPGGAGGIVNASFTLDYVVHNTAWVPGHFHLQVASLVTLTAMGSLYWLLPNLTGKPISDAQRRLGLAVVWLWFLGMMIMAVGLHWAGLLNVPRRAYIAQVPDAYPHAAVPMVFNVLAGIVLLVALLLFIYGLFSVLLSRERKPELAEAPLPFAEVISGPEDRRLVLAMDRIGFWFAVAAILVVLAYGPTLVQLFGHLNPVPGWRLW</sequence>
<comment type="catalytic activity">
    <reaction>
        <text>4 Fe(II)-[cytochrome c] + O2 + 8 H(+)(in) = 4 Fe(III)-[cytochrome c] + 2 H2O + 4 H(+)(out)</text>
        <dbReference type="Rhea" id="RHEA:11436"/>
        <dbReference type="Rhea" id="RHEA-COMP:10350"/>
        <dbReference type="Rhea" id="RHEA-COMP:14399"/>
        <dbReference type="ChEBI" id="CHEBI:15377"/>
        <dbReference type="ChEBI" id="CHEBI:15378"/>
        <dbReference type="ChEBI" id="CHEBI:15379"/>
        <dbReference type="ChEBI" id="CHEBI:29033"/>
        <dbReference type="ChEBI" id="CHEBI:29034"/>
        <dbReference type="EC" id="7.1.1.9"/>
    </reaction>
</comment>
<comment type="cofactor">
    <cofactor evidence="1">
        <name>heme</name>
        <dbReference type="ChEBI" id="CHEBI:30413"/>
    </cofactor>
    <text evidence="1">Binds 2 heme groups.</text>
</comment>
<comment type="cofactor">
    <cofactor evidence="1">
        <name>Cu cation</name>
        <dbReference type="ChEBI" id="CHEBI:23378"/>
    </cofactor>
    <text evidence="1">Binds a copper B center.</text>
</comment>
<comment type="pathway">
    <text>Energy metabolism; oxidative phosphorylation.</text>
</comment>
<comment type="subcellular location">
    <subcellularLocation>
        <location>Cell membrane</location>
        <topology>Multi-pass membrane protein</topology>
    </subcellularLocation>
</comment>
<comment type="similarity">
    <text evidence="3">Belongs to the heme-copper respiratory oxidase family.</text>
</comment>
<reference key="1">
    <citation type="journal article" date="1995" name="J. Biol. Chem.">
        <title>Molecular genetic and protein chemical characterization of the cytochrome ba3 from Thermus thermophilus HB8.</title>
        <authorList>
            <person name="Keightley J.A."/>
            <person name="Zimmermann B.H."/>
            <person name="Mather M.W."/>
            <person name="Springer P."/>
            <person name="Pastuszyn A."/>
            <person name="Lawrence D.M."/>
            <person name="Fee J.A."/>
        </authorList>
    </citation>
    <scope>NUCLEOTIDE SEQUENCE [GENOMIC DNA]</scope>
</reference>
<reference key="2">
    <citation type="submission" date="2004-11" db="EMBL/GenBank/DDBJ databases">
        <title>Complete genome sequence of Thermus thermophilus HB8.</title>
        <authorList>
            <person name="Masui R."/>
            <person name="Kurokawa K."/>
            <person name="Nakagawa N."/>
            <person name="Tokunaga F."/>
            <person name="Koyama Y."/>
            <person name="Shibata T."/>
            <person name="Oshima T."/>
            <person name="Yokoyama S."/>
            <person name="Yasunaga T."/>
            <person name="Kuramitsu S."/>
        </authorList>
    </citation>
    <scope>NUCLEOTIDE SEQUENCE [LARGE SCALE GENOMIC DNA]</scope>
    <source>
        <strain>ATCC 27634 / DSM 579 / HB8</strain>
    </source>
</reference>
<reference key="3">
    <citation type="journal article" date="1999" name="Protein Sci.">
        <title>Evidence for a copper-coordinated histidine-tyrosine cross-link in the active site of cytochrome oxidase.</title>
        <authorList>
            <person name="Buse G."/>
            <person name="Soulimane T."/>
            <person name="Dewor M."/>
            <person name="Meyer H.E."/>
            <person name="Blueggel M."/>
        </authorList>
    </citation>
    <scope>COVALENT BOND</scope>
</reference>
<reference key="4">
    <citation type="journal article" date="2000" name="EMBO J.">
        <title>Structure and mechanism of the aberrant ba3-cytochrome c oxidase from Thermus thermophilus.</title>
        <authorList>
            <person name="Soulimane T."/>
            <person name="Buse G."/>
            <person name="Bourenkov G.P."/>
            <person name="Bartunik H.D."/>
            <person name="Huber R."/>
            <person name="Than M.E."/>
        </authorList>
    </citation>
    <scope>X-RAY CRYSTALLOGRAPHY (2.4 ANGSTROMS)</scope>
</reference>
<organism>
    <name type="scientific">Thermus thermophilus (strain ATCC 27634 / DSM 579 / HB8)</name>
    <dbReference type="NCBI Taxonomy" id="300852"/>
    <lineage>
        <taxon>Bacteria</taxon>
        <taxon>Thermotogati</taxon>
        <taxon>Deinococcota</taxon>
        <taxon>Deinococci</taxon>
        <taxon>Thermales</taxon>
        <taxon>Thermaceae</taxon>
        <taxon>Thermus</taxon>
    </lineage>
</organism>